<gene>
    <name evidence="1" type="primary">rpsP</name>
    <name type="ordered locus">RHE_CH03959</name>
</gene>
<protein>
    <recommendedName>
        <fullName evidence="1">Small ribosomal subunit protein bS16</fullName>
    </recommendedName>
    <alternativeName>
        <fullName evidence="3">30S ribosomal protein S16</fullName>
    </alternativeName>
</protein>
<proteinExistence type="inferred from homology"/>
<accession>Q2K382</accession>
<organism>
    <name type="scientific">Rhizobium etli (strain ATCC 51251 / DSM 11541 / JCM 21823 / NBRC 15573 / CFN 42)</name>
    <dbReference type="NCBI Taxonomy" id="347834"/>
    <lineage>
        <taxon>Bacteria</taxon>
        <taxon>Pseudomonadati</taxon>
        <taxon>Pseudomonadota</taxon>
        <taxon>Alphaproteobacteria</taxon>
        <taxon>Hyphomicrobiales</taxon>
        <taxon>Rhizobiaceae</taxon>
        <taxon>Rhizobium/Agrobacterium group</taxon>
        <taxon>Rhizobium</taxon>
    </lineage>
</organism>
<feature type="chain" id="PRO_0000243856" description="Small ribosomal subunit protein bS16">
    <location>
        <begin position="1"/>
        <end position="122"/>
    </location>
</feature>
<feature type="region of interest" description="Disordered" evidence="2">
    <location>
        <begin position="85"/>
        <end position="122"/>
    </location>
</feature>
<feature type="compositionally biased region" description="Basic and acidic residues" evidence="2">
    <location>
        <begin position="99"/>
        <end position="110"/>
    </location>
</feature>
<feature type="compositionally biased region" description="Low complexity" evidence="2">
    <location>
        <begin position="111"/>
        <end position="122"/>
    </location>
</feature>
<sequence length="122" mass="13526">MALKIRLARGGSKKRPYYHVVLADARSPRDGRFLENLGSWNPMLAKDDEKRVQLNAERIKHWLDNGAQPTDRVLRFLNEAGVAKREAKNNPIKAKPGKRAQERAAEKAQKAADAAAAADAAE</sequence>
<evidence type="ECO:0000255" key="1">
    <source>
        <dbReference type="HAMAP-Rule" id="MF_00385"/>
    </source>
</evidence>
<evidence type="ECO:0000256" key="2">
    <source>
        <dbReference type="SAM" id="MobiDB-lite"/>
    </source>
</evidence>
<evidence type="ECO:0000305" key="3"/>
<keyword id="KW-1185">Reference proteome</keyword>
<keyword id="KW-0687">Ribonucleoprotein</keyword>
<keyword id="KW-0689">Ribosomal protein</keyword>
<dbReference type="EMBL" id="CP000133">
    <property type="protein sequence ID" value="ABC92704.1"/>
    <property type="molecule type" value="Genomic_DNA"/>
</dbReference>
<dbReference type="RefSeq" id="WP_011427150.1">
    <property type="nucleotide sequence ID" value="NC_007761.1"/>
</dbReference>
<dbReference type="SMR" id="Q2K382"/>
<dbReference type="KEGG" id="ret:RHE_CH03959"/>
<dbReference type="eggNOG" id="COG0228">
    <property type="taxonomic scope" value="Bacteria"/>
</dbReference>
<dbReference type="HOGENOM" id="CLU_100590_3_1_5"/>
<dbReference type="OrthoDB" id="9807878at2"/>
<dbReference type="Proteomes" id="UP000001936">
    <property type="component" value="Chromosome"/>
</dbReference>
<dbReference type="GO" id="GO:0005737">
    <property type="term" value="C:cytoplasm"/>
    <property type="evidence" value="ECO:0007669"/>
    <property type="project" value="UniProtKB-ARBA"/>
</dbReference>
<dbReference type="GO" id="GO:0015935">
    <property type="term" value="C:small ribosomal subunit"/>
    <property type="evidence" value="ECO:0007669"/>
    <property type="project" value="TreeGrafter"/>
</dbReference>
<dbReference type="GO" id="GO:0003735">
    <property type="term" value="F:structural constituent of ribosome"/>
    <property type="evidence" value="ECO:0007669"/>
    <property type="project" value="InterPro"/>
</dbReference>
<dbReference type="GO" id="GO:0006412">
    <property type="term" value="P:translation"/>
    <property type="evidence" value="ECO:0007669"/>
    <property type="project" value="UniProtKB-UniRule"/>
</dbReference>
<dbReference type="Gene3D" id="3.30.1320.10">
    <property type="match status" value="1"/>
</dbReference>
<dbReference type="HAMAP" id="MF_00385">
    <property type="entry name" value="Ribosomal_bS16"/>
    <property type="match status" value="1"/>
</dbReference>
<dbReference type="InterPro" id="IPR000307">
    <property type="entry name" value="Ribosomal_bS16"/>
</dbReference>
<dbReference type="InterPro" id="IPR023803">
    <property type="entry name" value="Ribosomal_bS16_dom_sf"/>
</dbReference>
<dbReference type="NCBIfam" id="TIGR00002">
    <property type="entry name" value="S16"/>
    <property type="match status" value="1"/>
</dbReference>
<dbReference type="PANTHER" id="PTHR12919">
    <property type="entry name" value="30S RIBOSOMAL PROTEIN S16"/>
    <property type="match status" value="1"/>
</dbReference>
<dbReference type="PANTHER" id="PTHR12919:SF20">
    <property type="entry name" value="SMALL RIBOSOMAL SUBUNIT PROTEIN BS16M"/>
    <property type="match status" value="1"/>
</dbReference>
<dbReference type="Pfam" id="PF00886">
    <property type="entry name" value="Ribosomal_S16"/>
    <property type="match status" value="1"/>
</dbReference>
<dbReference type="SUPFAM" id="SSF54565">
    <property type="entry name" value="Ribosomal protein S16"/>
    <property type="match status" value="1"/>
</dbReference>
<name>RS16_RHIEC</name>
<comment type="similarity">
    <text evidence="1">Belongs to the bacterial ribosomal protein bS16 family.</text>
</comment>
<reference key="1">
    <citation type="journal article" date="2006" name="Proc. Natl. Acad. Sci. U.S.A.">
        <title>The partitioned Rhizobium etli genome: genetic and metabolic redundancy in seven interacting replicons.</title>
        <authorList>
            <person name="Gonzalez V."/>
            <person name="Santamaria R.I."/>
            <person name="Bustos P."/>
            <person name="Hernandez-Gonzalez I."/>
            <person name="Medrano-Soto A."/>
            <person name="Moreno-Hagelsieb G."/>
            <person name="Janga S.C."/>
            <person name="Ramirez M.A."/>
            <person name="Jimenez-Jacinto V."/>
            <person name="Collado-Vides J."/>
            <person name="Davila G."/>
        </authorList>
    </citation>
    <scope>NUCLEOTIDE SEQUENCE [LARGE SCALE GENOMIC DNA]</scope>
    <source>
        <strain>ATCC 51251 / DSM 11541 / JCM 21823 / NBRC 15573 / CFN 42</strain>
    </source>
</reference>